<comment type="function">
    <text evidence="1">Catalyzes the 2-thiolation of uridine at the wobble position (U34) of tRNA, leading to the formation of s(2)U34.</text>
</comment>
<comment type="catalytic activity">
    <reaction evidence="1">
        <text>S-sulfanyl-L-cysteinyl-[protein] + uridine(34) in tRNA + AH2 + ATP = 2-thiouridine(34) in tRNA + L-cysteinyl-[protein] + A + AMP + diphosphate + H(+)</text>
        <dbReference type="Rhea" id="RHEA:47032"/>
        <dbReference type="Rhea" id="RHEA-COMP:10131"/>
        <dbReference type="Rhea" id="RHEA-COMP:11726"/>
        <dbReference type="Rhea" id="RHEA-COMP:11727"/>
        <dbReference type="Rhea" id="RHEA-COMP:11728"/>
        <dbReference type="ChEBI" id="CHEBI:13193"/>
        <dbReference type="ChEBI" id="CHEBI:15378"/>
        <dbReference type="ChEBI" id="CHEBI:17499"/>
        <dbReference type="ChEBI" id="CHEBI:29950"/>
        <dbReference type="ChEBI" id="CHEBI:30616"/>
        <dbReference type="ChEBI" id="CHEBI:33019"/>
        <dbReference type="ChEBI" id="CHEBI:61963"/>
        <dbReference type="ChEBI" id="CHEBI:65315"/>
        <dbReference type="ChEBI" id="CHEBI:87170"/>
        <dbReference type="ChEBI" id="CHEBI:456215"/>
        <dbReference type="EC" id="2.8.1.13"/>
    </reaction>
</comment>
<comment type="subcellular location">
    <subcellularLocation>
        <location evidence="1">Cytoplasm</location>
    </subcellularLocation>
</comment>
<comment type="similarity">
    <text evidence="1">Belongs to the MnmA/TRMU family.</text>
</comment>
<dbReference type="EC" id="2.8.1.13" evidence="1"/>
<dbReference type="EMBL" id="AE005673">
    <property type="protein sequence ID" value="AAK22882.1"/>
    <property type="molecule type" value="Genomic_DNA"/>
</dbReference>
<dbReference type="PIR" id="F87360">
    <property type="entry name" value="F87360"/>
</dbReference>
<dbReference type="RefSeq" id="NP_419714.1">
    <property type="nucleotide sequence ID" value="NC_002696.2"/>
</dbReference>
<dbReference type="SMR" id="P58074"/>
<dbReference type="STRING" id="190650.CC_0897"/>
<dbReference type="EnsemblBacteria" id="AAK22882">
    <property type="protein sequence ID" value="AAK22882"/>
    <property type="gene ID" value="CC_0897"/>
</dbReference>
<dbReference type="KEGG" id="ccr:CC_0897"/>
<dbReference type="PATRIC" id="fig|190650.5.peg.910"/>
<dbReference type="eggNOG" id="COG0482">
    <property type="taxonomic scope" value="Bacteria"/>
</dbReference>
<dbReference type="HOGENOM" id="CLU_035188_0_1_5"/>
<dbReference type="BioCyc" id="CAULO:CC0897-MONOMER"/>
<dbReference type="Proteomes" id="UP000001816">
    <property type="component" value="Chromosome"/>
</dbReference>
<dbReference type="GO" id="GO:0005737">
    <property type="term" value="C:cytoplasm"/>
    <property type="evidence" value="ECO:0007669"/>
    <property type="project" value="UniProtKB-SubCell"/>
</dbReference>
<dbReference type="GO" id="GO:0005524">
    <property type="term" value="F:ATP binding"/>
    <property type="evidence" value="ECO:0007669"/>
    <property type="project" value="UniProtKB-KW"/>
</dbReference>
<dbReference type="GO" id="GO:0000049">
    <property type="term" value="F:tRNA binding"/>
    <property type="evidence" value="ECO:0007669"/>
    <property type="project" value="UniProtKB-KW"/>
</dbReference>
<dbReference type="GO" id="GO:0103016">
    <property type="term" value="F:tRNA-uridine 2-sulfurtransferase activity"/>
    <property type="evidence" value="ECO:0007669"/>
    <property type="project" value="UniProtKB-EC"/>
</dbReference>
<dbReference type="GO" id="GO:0002143">
    <property type="term" value="P:tRNA wobble position uridine thiolation"/>
    <property type="evidence" value="ECO:0007669"/>
    <property type="project" value="TreeGrafter"/>
</dbReference>
<dbReference type="CDD" id="cd01998">
    <property type="entry name" value="MnmA_TRMU-like"/>
    <property type="match status" value="1"/>
</dbReference>
<dbReference type="FunFam" id="2.30.30.280:FF:000001">
    <property type="entry name" value="tRNA-specific 2-thiouridylase MnmA"/>
    <property type="match status" value="1"/>
</dbReference>
<dbReference type="FunFam" id="3.40.50.620:FF:000115">
    <property type="entry name" value="tRNA-specific 2-thiouridylase MnmA"/>
    <property type="match status" value="1"/>
</dbReference>
<dbReference type="Gene3D" id="2.30.30.280">
    <property type="entry name" value="Adenine nucleotide alpha hydrolases-like domains"/>
    <property type="match status" value="1"/>
</dbReference>
<dbReference type="Gene3D" id="3.40.50.620">
    <property type="entry name" value="HUPs"/>
    <property type="match status" value="1"/>
</dbReference>
<dbReference type="Gene3D" id="2.40.30.10">
    <property type="entry name" value="Translation factors"/>
    <property type="match status" value="1"/>
</dbReference>
<dbReference type="HAMAP" id="MF_00144">
    <property type="entry name" value="tRNA_thiouridyl_MnmA"/>
    <property type="match status" value="1"/>
</dbReference>
<dbReference type="InterPro" id="IPR004506">
    <property type="entry name" value="MnmA-like"/>
</dbReference>
<dbReference type="InterPro" id="IPR046885">
    <property type="entry name" value="MnmA-like_C"/>
</dbReference>
<dbReference type="InterPro" id="IPR046884">
    <property type="entry name" value="MnmA-like_central"/>
</dbReference>
<dbReference type="InterPro" id="IPR023382">
    <property type="entry name" value="MnmA-like_central_sf"/>
</dbReference>
<dbReference type="InterPro" id="IPR014729">
    <property type="entry name" value="Rossmann-like_a/b/a_fold"/>
</dbReference>
<dbReference type="NCBIfam" id="NF001138">
    <property type="entry name" value="PRK00143.1"/>
    <property type="match status" value="1"/>
</dbReference>
<dbReference type="NCBIfam" id="TIGR00420">
    <property type="entry name" value="trmU"/>
    <property type="match status" value="1"/>
</dbReference>
<dbReference type="PANTHER" id="PTHR11933:SF5">
    <property type="entry name" value="MITOCHONDRIAL TRNA-SPECIFIC 2-THIOURIDYLASE 1"/>
    <property type="match status" value="1"/>
</dbReference>
<dbReference type="PANTHER" id="PTHR11933">
    <property type="entry name" value="TRNA 5-METHYLAMINOMETHYL-2-THIOURIDYLATE -METHYLTRANSFERASE"/>
    <property type="match status" value="1"/>
</dbReference>
<dbReference type="Pfam" id="PF03054">
    <property type="entry name" value="tRNA_Me_trans"/>
    <property type="match status" value="1"/>
</dbReference>
<dbReference type="Pfam" id="PF20258">
    <property type="entry name" value="tRNA_Me_trans_C"/>
    <property type="match status" value="1"/>
</dbReference>
<dbReference type="Pfam" id="PF20259">
    <property type="entry name" value="tRNA_Me_trans_M"/>
    <property type="match status" value="1"/>
</dbReference>
<dbReference type="SUPFAM" id="SSF52402">
    <property type="entry name" value="Adenine nucleotide alpha hydrolases-like"/>
    <property type="match status" value="1"/>
</dbReference>
<gene>
    <name evidence="1" type="primary">mnmA</name>
    <name type="synonym">trmU</name>
    <name type="ordered locus">CC_0897</name>
</gene>
<sequence>MRAAVGLPEGARIVAAMSGGVDSTVTAALLARAGYDVVGVTLQLYDHGAAISRKGACCAGQDILDARMAAERIGIPHYVLDYESRFREQVIEDFADAYLRGETPIPCVRCNQTVKFRDLLDVARDLGAEAMATGHYVQRAMPGNGGNRPELRRAADPAKDQSYFLFATTREQLDFLRFPLGGMDKPTVRAVAAGLGLSIADKPDSQDICFVPEGKYTTVIDRIRPQGAEAGDVVHLDGRVLGRHEGVTRYTIGQRRGLNIAVGDPLFVVKINADKRQVIVGPREALLTASLTLKEGSWLGAQDSLEAAAEDGQRVLARVRSTREPVPGRLAMIDGALSVVFDGAEEGVAPGQACVLYDPADPDRVLGGGFIAGTTRQMDLNAA</sequence>
<name>MNMA_CAUVC</name>
<keyword id="KW-0067">ATP-binding</keyword>
<keyword id="KW-0963">Cytoplasm</keyword>
<keyword id="KW-1015">Disulfide bond</keyword>
<keyword id="KW-0547">Nucleotide-binding</keyword>
<keyword id="KW-1185">Reference proteome</keyword>
<keyword id="KW-0694">RNA-binding</keyword>
<keyword id="KW-0808">Transferase</keyword>
<keyword id="KW-0819">tRNA processing</keyword>
<keyword id="KW-0820">tRNA-binding</keyword>
<reference key="1">
    <citation type="journal article" date="2001" name="Proc. Natl. Acad. Sci. U.S.A.">
        <title>Complete genome sequence of Caulobacter crescentus.</title>
        <authorList>
            <person name="Nierman W.C."/>
            <person name="Feldblyum T.V."/>
            <person name="Laub M.T."/>
            <person name="Paulsen I.T."/>
            <person name="Nelson K.E."/>
            <person name="Eisen J.A."/>
            <person name="Heidelberg J.F."/>
            <person name="Alley M.R.K."/>
            <person name="Ohta N."/>
            <person name="Maddock J.R."/>
            <person name="Potocka I."/>
            <person name="Nelson W.C."/>
            <person name="Newton A."/>
            <person name="Stephens C."/>
            <person name="Phadke N.D."/>
            <person name="Ely B."/>
            <person name="DeBoy R.T."/>
            <person name="Dodson R.J."/>
            <person name="Durkin A.S."/>
            <person name="Gwinn M.L."/>
            <person name="Haft D.H."/>
            <person name="Kolonay J.F."/>
            <person name="Smit J."/>
            <person name="Craven M.B."/>
            <person name="Khouri H.M."/>
            <person name="Shetty J."/>
            <person name="Berry K.J."/>
            <person name="Utterback T.R."/>
            <person name="Tran K."/>
            <person name="Wolf A.M."/>
            <person name="Vamathevan J.J."/>
            <person name="Ermolaeva M.D."/>
            <person name="White O."/>
            <person name="Salzberg S.L."/>
            <person name="Venter J.C."/>
            <person name="Shapiro L."/>
            <person name="Fraser C.M."/>
        </authorList>
    </citation>
    <scope>NUCLEOTIDE SEQUENCE [LARGE SCALE GENOMIC DNA]</scope>
    <source>
        <strain>ATCC 19089 / CIP 103742 / CB 15</strain>
    </source>
</reference>
<proteinExistence type="inferred from homology"/>
<accession>P58074</accession>
<organism>
    <name type="scientific">Caulobacter vibrioides (strain ATCC 19089 / CIP 103742 / CB 15)</name>
    <name type="common">Caulobacter crescentus</name>
    <dbReference type="NCBI Taxonomy" id="190650"/>
    <lineage>
        <taxon>Bacteria</taxon>
        <taxon>Pseudomonadati</taxon>
        <taxon>Pseudomonadota</taxon>
        <taxon>Alphaproteobacteria</taxon>
        <taxon>Caulobacterales</taxon>
        <taxon>Caulobacteraceae</taxon>
        <taxon>Caulobacter</taxon>
    </lineage>
</organism>
<evidence type="ECO:0000255" key="1">
    <source>
        <dbReference type="HAMAP-Rule" id="MF_00144"/>
    </source>
</evidence>
<protein>
    <recommendedName>
        <fullName evidence="1">tRNA-specific 2-thiouridylase MnmA</fullName>
        <ecNumber evidence="1">2.8.1.13</ecNumber>
    </recommendedName>
</protein>
<feature type="chain" id="PRO_0000121620" description="tRNA-specific 2-thiouridylase MnmA">
    <location>
        <begin position="1"/>
        <end position="383"/>
    </location>
</feature>
<feature type="region of interest" description="Interaction with tRNA" evidence="1">
    <location>
        <begin position="159"/>
        <end position="161"/>
    </location>
</feature>
<feature type="active site" description="Nucleophile" evidence="1">
    <location>
        <position position="110"/>
    </location>
</feature>
<feature type="active site" description="Cysteine persulfide intermediate" evidence="1">
    <location>
        <position position="209"/>
    </location>
</feature>
<feature type="binding site" evidence="1">
    <location>
        <begin position="16"/>
        <end position="23"/>
    </location>
    <ligand>
        <name>ATP</name>
        <dbReference type="ChEBI" id="CHEBI:30616"/>
    </ligand>
</feature>
<feature type="binding site" evidence="1">
    <location>
        <position position="42"/>
    </location>
    <ligand>
        <name>ATP</name>
        <dbReference type="ChEBI" id="CHEBI:30616"/>
    </ligand>
</feature>
<feature type="binding site" evidence="1">
    <location>
        <position position="134"/>
    </location>
    <ligand>
        <name>ATP</name>
        <dbReference type="ChEBI" id="CHEBI:30616"/>
    </ligand>
</feature>
<feature type="site" description="Interaction with tRNA" evidence="1">
    <location>
        <position position="135"/>
    </location>
</feature>
<feature type="site" description="Interaction with tRNA" evidence="1">
    <location>
        <position position="352"/>
    </location>
</feature>
<feature type="disulfide bond" description="Alternate" evidence="1">
    <location>
        <begin position="110"/>
        <end position="209"/>
    </location>
</feature>